<feature type="chain" id="PRO_0000296665" description="Protein C19orf12 homolog">
    <location>
        <begin position="1"/>
        <end position="141"/>
    </location>
</feature>
<feature type="transmembrane region" description="Helical" evidence="2">
    <location>
        <begin position="33"/>
        <end position="53"/>
    </location>
</feature>
<organism>
    <name type="scientific">Xenopus tropicalis</name>
    <name type="common">Western clawed frog</name>
    <name type="synonym">Silurana tropicalis</name>
    <dbReference type="NCBI Taxonomy" id="8364"/>
    <lineage>
        <taxon>Eukaryota</taxon>
        <taxon>Metazoa</taxon>
        <taxon>Chordata</taxon>
        <taxon>Craniata</taxon>
        <taxon>Vertebrata</taxon>
        <taxon>Euteleostomi</taxon>
        <taxon>Amphibia</taxon>
        <taxon>Batrachia</taxon>
        <taxon>Anura</taxon>
        <taxon>Pipoidea</taxon>
        <taxon>Pipidae</taxon>
        <taxon>Xenopodinae</taxon>
        <taxon>Xenopus</taxon>
        <taxon>Silurana</taxon>
    </lineage>
</organism>
<sequence>MPVQVDDIIKLLCHVSDHQKMKATIKHSARGALVAAAGAFLGGLVGGPPGIAVGGAVGGAMGAWMTSGQFKPIPQIIMELPPVQQQRLCDDIYTIVRTLDWTDATQLIMLVMGNDSLKQKVVAALINYMTKELQAEIQYGD</sequence>
<comment type="subcellular location">
    <subcellularLocation>
        <location evidence="1">Mitochondrion</location>
    </subcellularLocation>
    <subcellularLocation>
        <location evidence="1">Mitochondrion membrane</location>
        <topology evidence="2">Single-pass membrane protein</topology>
    </subcellularLocation>
    <subcellularLocation>
        <location evidence="1">Endoplasmic reticulum</location>
    </subcellularLocation>
    <subcellularLocation>
        <location evidence="1">Cytoplasm</location>
        <location evidence="1">Cytosol</location>
    </subcellularLocation>
    <text evidence="1">In response to oxidative stress, relocates to the cytosol forming aggregates that partially co-localize with mitochondria.</text>
</comment>
<comment type="similarity">
    <text evidence="3">Belongs to the C19orf12 family.</text>
</comment>
<protein>
    <recommendedName>
        <fullName>Protein C19orf12 homolog</fullName>
    </recommendedName>
</protein>
<accession>Q6DJ35</accession>
<reference key="1">
    <citation type="submission" date="2004-06" db="EMBL/GenBank/DDBJ databases">
        <authorList>
            <consortium name="NIH - Xenopus Gene Collection (XGC) project"/>
        </authorList>
    </citation>
    <scope>NUCLEOTIDE SEQUENCE [LARGE SCALE MRNA]</scope>
</reference>
<dbReference type="EMBL" id="BC075349">
    <property type="protein sequence ID" value="AAH75349.1"/>
    <property type="molecule type" value="mRNA"/>
</dbReference>
<dbReference type="RefSeq" id="NP_001004911.1">
    <property type="nucleotide sequence ID" value="NM_001004911.1"/>
</dbReference>
<dbReference type="RefSeq" id="XP_012816288.1">
    <property type="nucleotide sequence ID" value="XM_012960834.2"/>
</dbReference>
<dbReference type="RefSeq" id="XP_012816289.1">
    <property type="nucleotide sequence ID" value="XM_012960835.2"/>
</dbReference>
<dbReference type="RefSeq" id="XP_012816290.1">
    <property type="nucleotide sequence ID" value="XM_012960836.2"/>
</dbReference>
<dbReference type="FunCoup" id="Q6DJ35">
    <property type="interactions" value="997"/>
</dbReference>
<dbReference type="STRING" id="8364.ENSXETP00000034021"/>
<dbReference type="PaxDb" id="8364-ENSXETP00000022991"/>
<dbReference type="DNASU" id="448278"/>
<dbReference type="GeneID" id="448278"/>
<dbReference type="KEGG" id="xtr:448278"/>
<dbReference type="AGR" id="Xenbase:XB-GENE-1009748"/>
<dbReference type="CTD" id="102230805"/>
<dbReference type="Xenbase" id="XB-GENE-1009748">
    <property type="gene designation" value="c4h19orf12"/>
</dbReference>
<dbReference type="eggNOG" id="ENOG502RZQC">
    <property type="taxonomic scope" value="Eukaryota"/>
</dbReference>
<dbReference type="HOGENOM" id="CLU_138025_0_0_1"/>
<dbReference type="InParanoid" id="Q6DJ35"/>
<dbReference type="OrthoDB" id="5976774at2759"/>
<dbReference type="PhylomeDB" id="Q6DJ35"/>
<dbReference type="TreeFam" id="TF323308"/>
<dbReference type="Proteomes" id="UP000008143">
    <property type="component" value="Chromosome 4"/>
</dbReference>
<dbReference type="Bgee" id="ENSXETG00000010474">
    <property type="expression patterns" value="Expressed in liver and 13 other cell types or tissues"/>
</dbReference>
<dbReference type="GO" id="GO:0005829">
    <property type="term" value="C:cytosol"/>
    <property type="evidence" value="ECO:0007669"/>
    <property type="project" value="UniProtKB-SubCell"/>
</dbReference>
<dbReference type="GO" id="GO:0005783">
    <property type="term" value="C:endoplasmic reticulum"/>
    <property type="evidence" value="ECO:0000250"/>
    <property type="project" value="UniProtKB"/>
</dbReference>
<dbReference type="GO" id="GO:0031966">
    <property type="term" value="C:mitochondrial membrane"/>
    <property type="evidence" value="ECO:0000250"/>
    <property type="project" value="UniProtKB"/>
</dbReference>
<dbReference type="GO" id="GO:0005739">
    <property type="term" value="C:mitochondrion"/>
    <property type="evidence" value="ECO:0000250"/>
    <property type="project" value="UniProtKB"/>
</dbReference>
<dbReference type="InterPro" id="IPR033369">
    <property type="entry name" value="C19orf12"/>
</dbReference>
<dbReference type="PANTHER" id="PTHR31493">
    <property type="entry name" value="NAZO FAMILY MEMBER"/>
    <property type="match status" value="1"/>
</dbReference>
<dbReference type="PANTHER" id="PTHR31493:SF1">
    <property type="entry name" value="PROTEIN C19ORF12"/>
    <property type="match status" value="1"/>
</dbReference>
<dbReference type="Pfam" id="PF20721">
    <property type="entry name" value="C19orf12"/>
    <property type="match status" value="1"/>
</dbReference>
<keyword id="KW-0963">Cytoplasm</keyword>
<keyword id="KW-0256">Endoplasmic reticulum</keyword>
<keyword id="KW-0472">Membrane</keyword>
<keyword id="KW-0496">Mitochondrion</keyword>
<keyword id="KW-1185">Reference proteome</keyword>
<keyword id="KW-0812">Transmembrane</keyword>
<keyword id="KW-1133">Transmembrane helix</keyword>
<name>CS012_XENTR</name>
<evidence type="ECO:0000250" key="1">
    <source>
        <dbReference type="UniProtKB" id="Q9NSK7"/>
    </source>
</evidence>
<evidence type="ECO:0000255" key="2"/>
<evidence type="ECO:0000305" key="3"/>
<proteinExistence type="evidence at transcript level"/>